<gene>
    <name type="primary">KRT80</name>
    <name type="synonym">KB20</name>
</gene>
<evidence type="ECO:0000255" key="1">
    <source>
        <dbReference type="PROSITE-ProRule" id="PRU01188"/>
    </source>
</evidence>
<evidence type="ECO:0000256" key="2">
    <source>
        <dbReference type="SAM" id="MobiDB-lite"/>
    </source>
</evidence>
<evidence type="ECO:0000269" key="3">
    <source>
    </source>
</evidence>
<evidence type="ECO:0000303" key="4">
    <source>
    </source>
</evidence>
<evidence type="ECO:0000303" key="5">
    <source>
    </source>
</evidence>
<evidence type="ECO:0000305" key="6"/>
<evidence type="ECO:0007744" key="7">
    <source>
    </source>
</evidence>
<evidence type="ECO:0007744" key="8">
    <source>
    </source>
</evidence>
<accession>Q6KB66</accession>
<accession>Q6P1A5</accession>
<accession>Q7Z3Q0</accession>
<feature type="chain" id="PRO_0000314896" description="Keratin, type II cytoskeletal 80">
    <location>
        <begin position="1"/>
        <end position="452"/>
    </location>
</feature>
<feature type="domain" description="IF rod" evidence="1">
    <location>
        <begin position="83"/>
        <end position="394"/>
    </location>
</feature>
<feature type="region of interest" description="Head">
    <location>
        <begin position="1"/>
        <end position="82"/>
    </location>
</feature>
<feature type="region of interest" description="Coil 1A">
    <location>
        <begin position="82"/>
        <end position="118"/>
    </location>
</feature>
<feature type="region of interest" description="Linker 1">
    <location>
        <begin position="119"/>
        <end position="135"/>
    </location>
</feature>
<feature type="region of interest" description="Coil 1B">
    <location>
        <begin position="136"/>
        <end position="227"/>
    </location>
</feature>
<feature type="region of interest" description="Linker 12">
    <location>
        <begin position="228"/>
        <end position="251"/>
    </location>
</feature>
<feature type="region of interest" description="Coil 2">
    <location>
        <begin position="252"/>
        <end position="390"/>
    </location>
</feature>
<feature type="region of interest" description="Tail">
    <location>
        <begin position="391"/>
        <end position="452"/>
    </location>
</feature>
<feature type="region of interest" description="Disordered" evidence="2">
    <location>
        <begin position="412"/>
        <end position="434"/>
    </location>
</feature>
<feature type="site" description="Stutter">
    <location>
        <position position="334"/>
    </location>
</feature>
<feature type="modified residue" description="Phosphoserine" evidence="7">
    <location>
        <position position="45"/>
    </location>
</feature>
<feature type="modified residue" description="Phosphoserine" evidence="7 8">
    <location>
        <position position="396"/>
    </location>
</feature>
<feature type="splice variant" id="VSP_030421" description="In isoform 3." evidence="5">
    <original>MACRSCVVGFSSLSSCEVTPVGSPRPGTSGWDSCRAPGPGFSSRSLTGCWSAGTISKVTVNPGLLVPLDVKLDPAVQQLKNQEKEEMKALNDKFASLIGK</original>
    <variation>MSCHFPGSPPWALAGQPGASAPDWSTPDPFAAFLLSQ</variation>
    <location>
        <begin position="1"/>
        <end position="100"/>
    </location>
</feature>
<feature type="splice variant" id="VSP_030422" description="In isoform 3." evidence="5">
    <original>K</original>
    <variation>KVACPACPRGSFLMGPGPSFPPDILLSFMPNQSPQRLKSQDQQTDRGIPPSPSSSFFEALSQISSGITPTLTQEAAPQPTPALGPSIPSPTTHHCCQPQ</variation>
    <location>
        <position position="190"/>
    </location>
</feature>
<feature type="splice variant" id="VSP_030423" description="In isoform 2." evidence="4">
    <original>ASRSGLSKAPSRKKKGSKGPVIKITEMSEKYFSQESEVSE</original>
    <variation>PSLPYPLCSL</variation>
    <location>
        <begin position="413"/>
        <end position="452"/>
    </location>
</feature>
<feature type="sequence variant" id="VAR_049807" description="In dbSNP:rs35725856.">
    <original>V</original>
    <variation>I</variation>
    <location>
        <position position="238"/>
    </location>
</feature>
<feature type="sequence conflict" description="In Ref. 1; CAG30732." evidence="6" ref="1">
    <original>Q</original>
    <variation>L</variation>
    <location>
        <position position="230"/>
    </location>
</feature>
<comment type="subunit">
    <text>Heterotetramer of two type I and two type II keratins.</text>
</comment>
<comment type="interaction">
    <interactant intactId="EBI-3046635">
        <id>Q6KB66</id>
    </interactant>
    <interactant intactId="EBI-739566">
        <id>P19012</id>
        <label>KRT15</label>
    </interactant>
    <organismsDiffer>false</organismsDiffer>
    <experiments>3</experiments>
</comment>
<comment type="interaction">
    <interactant intactId="EBI-3046635">
        <id>Q6KB66</id>
    </interactant>
    <interactant intactId="EBI-742094">
        <id>P35900</id>
        <label>KRT20</label>
    </interactant>
    <organismsDiffer>false</organismsDiffer>
    <experiments>3</experiments>
</comment>
<comment type="interaction">
    <interactant intactId="EBI-3046635">
        <id>Q6KB66</id>
    </interactant>
    <interactant intactId="EBI-748397">
        <id>P50222</id>
        <label>MEOX2</label>
    </interactant>
    <organismsDiffer>false</organismsDiffer>
    <experiments>3</experiments>
</comment>
<comment type="interaction">
    <interactant intactId="EBI-11999246">
        <id>Q6KB66-2</id>
    </interactant>
    <interactant intactId="EBI-8643161">
        <id>Q9NX04</id>
        <label>AIRIM</label>
    </interactant>
    <organismsDiffer>false</organismsDiffer>
    <experiments>3</experiments>
</comment>
<comment type="interaction">
    <interactant intactId="EBI-11999246">
        <id>Q6KB66-2</id>
    </interactant>
    <interactant intactId="EBI-350590">
        <id>Q9UNS2</id>
        <label>COPS3</label>
    </interactant>
    <organismsDiffer>false</organismsDiffer>
    <experiments>3</experiments>
</comment>
<comment type="interaction">
    <interactant intactId="EBI-11999246">
        <id>Q6KB66-2</id>
    </interactant>
    <interactant intactId="EBI-2857315">
        <id>Q9BRX5</id>
        <label>GINS3</label>
    </interactant>
    <organismsDiffer>false</organismsDiffer>
    <experiments>3</experiments>
</comment>
<comment type="interaction">
    <interactant intactId="EBI-11999246">
        <id>Q6KB66-2</id>
    </interactant>
    <interactant intactId="EBI-702178">
        <id>P02533</id>
        <label>KRT14</label>
    </interactant>
    <organismsDiffer>false</organismsDiffer>
    <experiments>3</experiments>
</comment>
<comment type="interaction">
    <interactant intactId="EBI-11999246">
        <id>Q6KB66-2</id>
    </interactant>
    <interactant intactId="EBI-739566">
        <id>P19012</id>
        <label>KRT15</label>
    </interactant>
    <organismsDiffer>false</organismsDiffer>
    <experiments>3</experiments>
</comment>
<comment type="interaction">
    <interactant intactId="EBI-11999246">
        <id>Q6KB66-2</id>
    </interactant>
    <interactant intactId="EBI-356410">
        <id>P08779</id>
        <label>KRT16</label>
    </interactant>
    <organismsDiffer>false</organismsDiffer>
    <experiments>3</experiments>
</comment>
<comment type="interaction">
    <interactant intactId="EBI-11999246">
        <id>Q6KB66-2</id>
    </interactant>
    <interactant intactId="EBI-742756">
        <id>P08727</id>
        <label>KRT19</label>
    </interactant>
    <organismsDiffer>false</organismsDiffer>
    <experiments>5</experiments>
</comment>
<comment type="interaction">
    <interactant intactId="EBI-11999246">
        <id>Q6KB66-2</id>
    </interactant>
    <interactant intactId="EBI-742094">
        <id>P35900</id>
        <label>KRT20</label>
    </interactant>
    <organismsDiffer>false</organismsDiffer>
    <experiments>3</experiments>
</comment>
<comment type="interaction">
    <interactant intactId="EBI-11999246">
        <id>Q6KB66-2</id>
    </interactant>
    <interactant intactId="EBI-2952736">
        <id>Q2M2I5</id>
        <label>KRT24</label>
    </interactant>
    <organismsDiffer>false</organismsDiffer>
    <experiments>5</experiments>
</comment>
<comment type="interaction">
    <interactant intactId="EBI-11999246">
        <id>Q6KB66-2</id>
    </interactant>
    <interactant intactId="EBI-11980489">
        <id>Q7Z3Y7</id>
        <label>KRT28</label>
    </interactant>
    <organismsDiffer>false</organismsDiffer>
    <experiments>3</experiments>
</comment>
<comment type="interaction">
    <interactant intactId="EBI-11999246">
        <id>Q6KB66-2</id>
    </interactant>
    <interactant intactId="EBI-948001">
        <id>Q15323</id>
        <label>KRT31</label>
    </interactant>
    <organismsDiffer>false</organismsDiffer>
    <experiments>3</experiments>
</comment>
<comment type="interaction">
    <interactant intactId="EBI-11999246">
        <id>Q6KB66-2</id>
    </interactant>
    <interactant intactId="EBI-1044146">
        <id>Q14532</id>
        <label>KRT32</label>
    </interactant>
    <organismsDiffer>false</organismsDiffer>
    <experiments>4</experiments>
</comment>
<comment type="interaction">
    <interactant intactId="EBI-11999246">
        <id>Q6KB66-2</id>
    </interactant>
    <interactant intactId="EBI-1049638">
        <id>Q14525</id>
        <label>KRT33B</label>
    </interactant>
    <organismsDiffer>false</organismsDiffer>
    <experiments>3</experiments>
</comment>
<comment type="interaction">
    <interactant intactId="EBI-11999246">
        <id>Q6KB66-2</id>
    </interactant>
    <interactant intactId="EBI-1047093">
        <id>O76011</id>
        <label>KRT34</label>
    </interactant>
    <organismsDiffer>false</organismsDiffer>
    <experiments>5</experiments>
</comment>
<comment type="interaction">
    <interactant intactId="EBI-11999246">
        <id>Q6KB66-2</id>
    </interactant>
    <interactant intactId="EBI-1058674">
        <id>Q92764</id>
        <label>KRT35</label>
    </interactant>
    <organismsDiffer>false</organismsDiffer>
    <experiments>3</experiments>
</comment>
<comment type="interaction">
    <interactant intactId="EBI-11999246">
        <id>Q6KB66-2</id>
    </interactant>
    <interactant intactId="EBI-11958506">
        <id>O76013-2</id>
        <label>KRT36</label>
    </interactant>
    <organismsDiffer>false</organismsDiffer>
    <experiments>3</experiments>
</comment>
<comment type="interaction">
    <interactant intactId="EBI-11999246">
        <id>Q6KB66-2</id>
    </interactant>
    <interactant intactId="EBI-1047263">
        <id>O76015</id>
        <label>KRT38</label>
    </interactant>
    <organismsDiffer>false</organismsDiffer>
    <experiments>5</experiments>
</comment>
<comment type="interaction">
    <interactant intactId="EBI-11999246">
        <id>Q6KB66-2</id>
    </interactant>
    <interactant intactId="EBI-8473670">
        <id>O95447</id>
        <label>LCA5L</label>
    </interactant>
    <organismsDiffer>false</organismsDiffer>
    <experiments>3</experiments>
</comment>
<comment type="interaction">
    <interactant intactId="EBI-11999246">
        <id>Q6KB66-2</id>
    </interactant>
    <interactant intactId="EBI-11959475">
        <id>P25791-3</id>
        <label>LMO2</label>
    </interactant>
    <organismsDiffer>false</organismsDiffer>
    <experiments>5</experiments>
</comment>
<comment type="alternative products">
    <event type="alternative splicing"/>
    <isoform>
        <id>Q6KB66-1</id>
        <name>1</name>
        <sequence type="displayed"/>
    </isoform>
    <isoform>
        <id>Q6KB66-2</id>
        <name>2</name>
        <sequence type="described" ref="VSP_030423"/>
    </isoform>
    <isoform>
        <id>Q6KB66-3</id>
        <name>3</name>
        <sequence type="described" ref="VSP_030421 VSP_030422"/>
    </isoform>
</comment>
<comment type="tissue specificity">
    <text evidence="3">Weakly expressed in tongue, but not skin or in any other tissues or organs examined.</text>
</comment>
<comment type="miscellaneous">
    <text>There are two types of cytoskeletal and microfibrillar keratin, I (acidic) and II (neutral to basic) (40-55 and 56-70 kDa, respectively).</text>
</comment>
<comment type="similarity">
    <text evidence="1">Belongs to the intermediate filament family.</text>
</comment>
<keyword id="KW-0025">Alternative splicing</keyword>
<keyword id="KW-0175">Coiled coil</keyword>
<keyword id="KW-0403">Intermediate filament</keyword>
<keyword id="KW-0416">Keratin</keyword>
<keyword id="KW-0597">Phosphoprotein</keyword>
<keyword id="KW-1267">Proteomics identification</keyword>
<keyword id="KW-1185">Reference proteome</keyword>
<protein>
    <recommendedName>
        <fullName>Keratin, type II cytoskeletal 80</fullName>
    </recommendedName>
    <alternativeName>
        <fullName>Cytokeratin-80</fullName>
        <shortName>CK-80</shortName>
    </alternativeName>
    <alternativeName>
        <fullName>Keratin-80</fullName>
        <shortName>K80</shortName>
    </alternativeName>
    <alternativeName>
        <fullName>Type-II keratin Kb20</fullName>
    </alternativeName>
</protein>
<dbReference type="EMBL" id="AJ717743">
    <property type="protein sequence ID" value="CAG30732.1"/>
    <property type="molecule type" value="mRNA"/>
</dbReference>
<dbReference type="EMBL" id="BX537567">
    <property type="protein sequence ID" value="CAD97784.1"/>
    <property type="molecule type" value="mRNA"/>
</dbReference>
<dbReference type="EMBL" id="CH471111">
    <property type="protein sequence ID" value="EAW58237.1"/>
    <property type="molecule type" value="Genomic_DNA"/>
</dbReference>
<dbReference type="EMBL" id="BC065180">
    <property type="protein sequence ID" value="AAH65180.1"/>
    <property type="molecule type" value="mRNA"/>
</dbReference>
<dbReference type="CCDS" id="CCDS41784.1">
    <molecule id="Q6KB66-2"/>
</dbReference>
<dbReference type="CCDS" id="CCDS8821.2">
    <molecule id="Q6KB66-1"/>
</dbReference>
<dbReference type="RefSeq" id="NP_001074961.1">
    <molecule id="Q6KB66-2"/>
    <property type="nucleotide sequence ID" value="NM_001081492.2"/>
</dbReference>
<dbReference type="RefSeq" id="NP_872313.2">
    <molecule id="Q6KB66-1"/>
    <property type="nucleotide sequence ID" value="NM_182507.3"/>
</dbReference>
<dbReference type="SMR" id="Q6KB66"/>
<dbReference type="BioGRID" id="126858">
    <property type="interactions" value="70"/>
</dbReference>
<dbReference type="ComplexPortal" id="CPX-5664">
    <property type="entry name" value="Keratin-80- Keratin-82 dimer complex"/>
</dbReference>
<dbReference type="FunCoup" id="Q6KB66">
    <property type="interactions" value="131"/>
</dbReference>
<dbReference type="IntAct" id="Q6KB66">
    <property type="interactions" value="38"/>
</dbReference>
<dbReference type="STRING" id="9606.ENSP00000378292"/>
<dbReference type="GlyGen" id="Q6KB66">
    <property type="glycosylation" value="1 site, 1 O-linked glycan (1 site)"/>
</dbReference>
<dbReference type="iPTMnet" id="Q6KB66"/>
<dbReference type="PhosphoSitePlus" id="Q6KB66"/>
<dbReference type="SwissPalm" id="Q6KB66"/>
<dbReference type="BioMuta" id="KRT80"/>
<dbReference type="DMDM" id="166218808"/>
<dbReference type="jPOST" id="Q6KB66"/>
<dbReference type="MassIVE" id="Q6KB66"/>
<dbReference type="PaxDb" id="9606-ENSP00000378292"/>
<dbReference type="PeptideAtlas" id="Q6KB66"/>
<dbReference type="PRIDE" id="Q6KB66"/>
<dbReference type="ProteomicsDB" id="66535">
    <molecule id="Q6KB66-1"/>
</dbReference>
<dbReference type="ProteomicsDB" id="66536">
    <molecule id="Q6KB66-2"/>
</dbReference>
<dbReference type="ProteomicsDB" id="66537">
    <molecule id="Q6KB66-3"/>
</dbReference>
<dbReference type="Antibodypedia" id="43038">
    <property type="antibodies" value="153 antibodies from 23 providers"/>
</dbReference>
<dbReference type="DNASU" id="144501"/>
<dbReference type="Ensembl" id="ENST00000313234.9">
    <molecule id="Q6KB66-2"/>
    <property type="protein sequence ID" value="ENSP00000369361.2"/>
    <property type="gene ID" value="ENSG00000167767.14"/>
</dbReference>
<dbReference type="Ensembl" id="ENST00000394815.3">
    <molecule id="Q6KB66-1"/>
    <property type="protein sequence ID" value="ENSP00000378292.2"/>
    <property type="gene ID" value="ENSG00000167767.14"/>
</dbReference>
<dbReference type="GeneID" id="144501"/>
<dbReference type="KEGG" id="hsa:144501"/>
<dbReference type="MANE-Select" id="ENST00000394815.3">
    <property type="protein sequence ID" value="ENSP00000378292.2"/>
    <property type="RefSeq nucleotide sequence ID" value="NM_182507.3"/>
    <property type="RefSeq protein sequence ID" value="NP_872313.2"/>
</dbReference>
<dbReference type="UCSC" id="uc001rzx.3">
    <molecule id="Q6KB66-1"/>
    <property type="organism name" value="human"/>
</dbReference>
<dbReference type="AGR" id="HGNC:27056"/>
<dbReference type="CTD" id="144501"/>
<dbReference type="DisGeNET" id="144501"/>
<dbReference type="GeneCards" id="KRT80"/>
<dbReference type="HGNC" id="HGNC:27056">
    <property type="gene designation" value="KRT80"/>
</dbReference>
<dbReference type="HPA" id="ENSG00000167767">
    <property type="expression patterns" value="Tissue enriched (skin)"/>
</dbReference>
<dbReference type="MIM" id="611161">
    <property type="type" value="gene"/>
</dbReference>
<dbReference type="neXtProt" id="NX_Q6KB66"/>
<dbReference type="OpenTargets" id="ENSG00000167767"/>
<dbReference type="PharmGKB" id="PA147357831"/>
<dbReference type="VEuPathDB" id="HostDB:ENSG00000167767"/>
<dbReference type="eggNOG" id="ENOG502RVYD">
    <property type="taxonomic scope" value="Eukaryota"/>
</dbReference>
<dbReference type="GeneTree" id="ENSGT00940000161279"/>
<dbReference type="HOGENOM" id="CLU_012560_5_4_1"/>
<dbReference type="InParanoid" id="Q6KB66"/>
<dbReference type="OMA" id="CSGMEYT"/>
<dbReference type="OrthoDB" id="2441647at2759"/>
<dbReference type="PAN-GO" id="Q6KB66">
    <property type="GO annotations" value="4 GO annotations based on evolutionary models"/>
</dbReference>
<dbReference type="PhylomeDB" id="Q6KB66"/>
<dbReference type="TreeFam" id="TF317854"/>
<dbReference type="PathwayCommons" id="Q6KB66"/>
<dbReference type="Reactome" id="R-HSA-6805567">
    <property type="pathway name" value="Keratinization"/>
</dbReference>
<dbReference type="Reactome" id="R-HSA-6809371">
    <property type="pathway name" value="Formation of the cornified envelope"/>
</dbReference>
<dbReference type="SignaLink" id="Q6KB66"/>
<dbReference type="BioGRID-ORCS" id="144501">
    <property type="hits" value="14 hits in 1142 CRISPR screens"/>
</dbReference>
<dbReference type="ChiTaRS" id="KRT80">
    <property type="organism name" value="human"/>
</dbReference>
<dbReference type="GeneWiki" id="KRT80"/>
<dbReference type="GenomeRNAi" id="144501"/>
<dbReference type="Pharos" id="Q6KB66">
    <property type="development level" value="Tbio"/>
</dbReference>
<dbReference type="PRO" id="PR:Q6KB66"/>
<dbReference type="Proteomes" id="UP000005640">
    <property type="component" value="Chromosome 12"/>
</dbReference>
<dbReference type="RNAct" id="Q6KB66">
    <property type="molecule type" value="protein"/>
</dbReference>
<dbReference type="Bgee" id="ENSG00000167767">
    <property type="expression patterns" value="Expressed in skin of abdomen and 115 other cell types or tissues"/>
</dbReference>
<dbReference type="GO" id="GO:0005737">
    <property type="term" value="C:cytoplasm"/>
    <property type="evidence" value="ECO:0000314"/>
    <property type="project" value="UniProtKB"/>
</dbReference>
<dbReference type="GO" id="GO:0005829">
    <property type="term" value="C:cytosol"/>
    <property type="evidence" value="ECO:0000304"/>
    <property type="project" value="Reactome"/>
</dbReference>
<dbReference type="GO" id="GO:0005882">
    <property type="term" value="C:intermediate filament"/>
    <property type="evidence" value="ECO:0000314"/>
    <property type="project" value="UniProtKB"/>
</dbReference>
<dbReference type="GO" id="GO:0045111">
    <property type="term" value="C:intermediate filament cytoskeleton"/>
    <property type="evidence" value="ECO:0000314"/>
    <property type="project" value="HPA"/>
</dbReference>
<dbReference type="GO" id="GO:0045095">
    <property type="term" value="C:keratin filament"/>
    <property type="evidence" value="ECO:0000318"/>
    <property type="project" value="GO_Central"/>
</dbReference>
<dbReference type="GO" id="GO:0030280">
    <property type="term" value="F:structural constituent of skin epidermis"/>
    <property type="evidence" value="ECO:0000318"/>
    <property type="project" value="GO_Central"/>
</dbReference>
<dbReference type="GO" id="GO:0045109">
    <property type="term" value="P:intermediate filament organization"/>
    <property type="evidence" value="ECO:0000318"/>
    <property type="project" value="GO_Central"/>
</dbReference>
<dbReference type="GO" id="GO:0031424">
    <property type="term" value="P:keratinization"/>
    <property type="evidence" value="ECO:0000318"/>
    <property type="project" value="GO_Central"/>
</dbReference>
<dbReference type="FunFam" id="1.20.5.1160:FF:000001">
    <property type="entry name" value="Keratin type II"/>
    <property type="match status" value="1"/>
</dbReference>
<dbReference type="FunFam" id="1.20.5.170:FF:000065">
    <property type="entry name" value="Keratin, type II cytoskeletal 80"/>
    <property type="match status" value="1"/>
</dbReference>
<dbReference type="Gene3D" id="1.20.5.170">
    <property type="match status" value="1"/>
</dbReference>
<dbReference type="Gene3D" id="1.20.5.500">
    <property type="entry name" value="Single helix bin"/>
    <property type="match status" value="1"/>
</dbReference>
<dbReference type="Gene3D" id="1.20.5.1160">
    <property type="entry name" value="Vasodilator-stimulated phosphoprotein"/>
    <property type="match status" value="1"/>
</dbReference>
<dbReference type="InterPro" id="IPR039008">
    <property type="entry name" value="IF_rod_dom"/>
</dbReference>
<dbReference type="InterPro" id="IPR003054">
    <property type="entry name" value="Keratin_II"/>
</dbReference>
<dbReference type="PANTHER" id="PTHR45616">
    <property type="entry name" value="GATA-TYPE DOMAIN-CONTAINING PROTEIN"/>
    <property type="match status" value="1"/>
</dbReference>
<dbReference type="PANTHER" id="PTHR45616:SF1">
    <property type="entry name" value="KERATIN, TYPE II CYTOSKELETAL 80"/>
    <property type="match status" value="1"/>
</dbReference>
<dbReference type="Pfam" id="PF00038">
    <property type="entry name" value="Filament"/>
    <property type="match status" value="1"/>
</dbReference>
<dbReference type="PRINTS" id="PR01276">
    <property type="entry name" value="TYPE2KERATIN"/>
</dbReference>
<dbReference type="SMART" id="SM01391">
    <property type="entry name" value="Filament"/>
    <property type="match status" value="1"/>
</dbReference>
<dbReference type="SUPFAM" id="SSF64593">
    <property type="entry name" value="Intermediate filament protein, coiled coil region"/>
    <property type="match status" value="2"/>
</dbReference>
<dbReference type="PROSITE" id="PS51842">
    <property type="entry name" value="IF_ROD_2"/>
    <property type="match status" value="1"/>
</dbReference>
<name>K2C80_HUMAN</name>
<sequence length="452" mass="50525">MACRSCVVGFSSLSSCEVTPVGSPRPGTSGWDSCRAPGPGFSSRSLTGCWSAGTISKVTVNPGLLVPLDVKLDPAVQQLKNQEKEEMKALNDKFASLIGKVQALEQRNQLLETRWSFLQGQDSAIFDLGHLYEEYQGRLQEELRKVSQERGQLEANLLQVLEKVEEFRIRYEDEISKRTDMEFTFVQLKKDLDAECLHRTELETKLKSLESFVELMKTIYEQELKDLAAQVKDVSVTVGMDSRCHIDLSGIVEEVKAQYDAVAARSLEEAEAYSRSQLEEQAARSAEYGSSLQSSRSEIADLNVRIQKLRSQILSVKSHCLKLEENIKTAEEQGELAFQDAKTKLAQLEAALQQAKQDMARQLRKYQELMNVKLALDIEIATYRKLVEGEEGRMDSPSATVVSAVQSRCKTAASRSGLSKAPSRKKKGSKGPVIKITEMSEKYFSQESEVSE</sequence>
<reference key="1">
    <citation type="journal article" date="2005" name="J. Invest. Dermatol.">
        <title>Characterization of new members of the human type II keratin gene family and a general evaluation of the keratin gene domain on chromosome 12q13.13.</title>
        <authorList>
            <person name="Rogers M.A."/>
            <person name="Edler L."/>
            <person name="Winter H."/>
            <person name="Langbein L."/>
            <person name="Beckmann I."/>
            <person name="Schweizer J."/>
        </authorList>
    </citation>
    <scope>NUCLEOTIDE SEQUENCE [MRNA] (ISOFORM 1)</scope>
    <scope>TISSUE SPECIFICITY</scope>
    <source>
        <tissue>Scalp</tissue>
    </source>
</reference>
<reference key="2">
    <citation type="journal article" date="2007" name="BMC Genomics">
        <title>The full-ORF clone resource of the German cDNA consortium.</title>
        <authorList>
            <person name="Bechtel S."/>
            <person name="Rosenfelder H."/>
            <person name="Duda A."/>
            <person name="Schmidt C.P."/>
            <person name="Ernst U."/>
            <person name="Wellenreuther R."/>
            <person name="Mehrle A."/>
            <person name="Schuster C."/>
            <person name="Bahr A."/>
            <person name="Bloecker H."/>
            <person name="Heubner D."/>
            <person name="Hoerlein A."/>
            <person name="Michel G."/>
            <person name="Wedler H."/>
            <person name="Koehrer K."/>
            <person name="Ottenwaelder B."/>
            <person name="Poustka A."/>
            <person name="Wiemann S."/>
            <person name="Schupp I."/>
        </authorList>
    </citation>
    <scope>NUCLEOTIDE SEQUENCE [LARGE SCALE MRNA] (ISOFORM 3)</scope>
    <source>
        <tissue>Endometrial adenocarcinoma</tissue>
    </source>
</reference>
<reference key="3">
    <citation type="submission" date="2005-07" db="EMBL/GenBank/DDBJ databases">
        <authorList>
            <person name="Mural R.J."/>
            <person name="Istrail S."/>
            <person name="Sutton G.G."/>
            <person name="Florea L."/>
            <person name="Halpern A.L."/>
            <person name="Mobarry C.M."/>
            <person name="Lippert R."/>
            <person name="Walenz B."/>
            <person name="Shatkay H."/>
            <person name="Dew I."/>
            <person name="Miller J.R."/>
            <person name="Flanigan M.J."/>
            <person name="Edwards N.J."/>
            <person name="Bolanos R."/>
            <person name="Fasulo D."/>
            <person name="Halldorsson B.V."/>
            <person name="Hannenhalli S."/>
            <person name="Turner R."/>
            <person name="Yooseph S."/>
            <person name="Lu F."/>
            <person name="Nusskern D.R."/>
            <person name="Shue B.C."/>
            <person name="Zheng X.H."/>
            <person name="Zhong F."/>
            <person name="Delcher A.L."/>
            <person name="Huson D.H."/>
            <person name="Kravitz S.A."/>
            <person name="Mouchard L."/>
            <person name="Reinert K."/>
            <person name="Remington K.A."/>
            <person name="Clark A.G."/>
            <person name="Waterman M.S."/>
            <person name="Eichler E.E."/>
            <person name="Adams M.D."/>
            <person name="Hunkapiller M.W."/>
            <person name="Myers E.W."/>
            <person name="Venter J.C."/>
        </authorList>
    </citation>
    <scope>NUCLEOTIDE SEQUENCE [LARGE SCALE GENOMIC DNA]</scope>
</reference>
<reference key="4">
    <citation type="journal article" date="2004" name="Genome Res.">
        <title>The status, quality, and expansion of the NIH full-length cDNA project: the Mammalian Gene Collection (MGC).</title>
        <authorList>
            <consortium name="The MGC Project Team"/>
        </authorList>
    </citation>
    <scope>NUCLEOTIDE SEQUENCE [LARGE SCALE MRNA] (ISOFORM 2)</scope>
    <source>
        <tissue>Prostate</tissue>
    </source>
</reference>
<reference key="5">
    <citation type="journal article" date="2008" name="Mol. Cell">
        <title>Kinase-selective enrichment enables quantitative phosphoproteomics of the kinome across the cell cycle.</title>
        <authorList>
            <person name="Daub H."/>
            <person name="Olsen J.V."/>
            <person name="Bairlein M."/>
            <person name="Gnad F."/>
            <person name="Oppermann F.S."/>
            <person name="Korner R."/>
            <person name="Greff Z."/>
            <person name="Keri G."/>
            <person name="Stemmann O."/>
            <person name="Mann M."/>
        </authorList>
    </citation>
    <scope>IDENTIFICATION BY MASS SPECTROMETRY [LARGE SCALE ANALYSIS]</scope>
    <source>
        <tissue>Cervix carcinoma</tissue>
    </source>
</reference>
<reference key="6">
    <citation type="journal article" date="2008" name="Proc. Natl. Acad. Sci. U.S.A.">
        <title>A quantitative atlas of mitotic phosphorylation.</title>
        <authorList>
            <person name="Dephoure N."/>
            <person name="Zhou C."/>
            <person name="Villen J."/>
            <person name="Beausoleil S.A."/>
            <person name="Bakalarski C.E."/>
            <person name="Elledge S.J."/>
            <person name="Gygi S.P."/>
        </authorList>
    </citation>
    <scope>PHOSPHORYLATION [LARGE SCALE ANALYSIS] AT SER-45 AND SER-396</scope>
    <scope>IDENTIFICATION BY MASS SPECTROMETRY [LARGE SCALE ANALYSIS]</scope>
    <source>
        <tissue>Cervix carcinoma</tissue>
    </source>
</reference>
<reference key="7">
    <citation type="journal article" date="2011" name="BMC Syst. Biol.">
        <title>Initial characterization of the human central proteome.</title>
        <authorList>
            <person name="Burkard T.R."/>
            <person name="Planyavsky M."/>
            <person name="Kaupe I."/>
            <person name="Breitwieser F.P."/>
            <person name="Buerckstuemmer T."/>
            <person name="Bennett K.L."/>
            <person name="Superti-Furga G."/>
            <person name="Colinge J."/>
        </authorList>
    </citation>
    <scope>IDENTIFICATION BY MASS SPECTROMETRY [LARGE SCALE ANALYSIS]</scope>
</reference>
<reference key="8">
    <citation type="journal article" date="2013" name="J. Proteome Res.">
        <title>Toward a comprehensive characterization of a human cancer cell phosphoproteome.</title>
        <authorList>
            <person name="Zhou H."/>
            <person name="Di Palma S."/>
            <person name="Preisinger C."/>
            <person name="Peng M."/>
            <person name="Polat A.N."/>
            <person name="Heck A.J."/>
            <person name="Mohammed S."/>
        </authorList>
    </citation>
    <scope>PHOSPHORYLATION [LARGE SCALE ANALYSIS] AT SER-396</scope>
    <scope>IDENTIFICATION BY MASS SPECTROMETRY [LARGE SCALE ANALYSIS]</scope>
    <source>
        <tissue>Cervix carcinoma</tissue>
    </source>
</reference>
<proteinExistence type="evidence at protein level"/>
<organism>
    <name type="scientific">Homo sapiens</name>
    <name type="common">Human</name>
    <dbReference type="NCBI Taxonomy" id="9606"/>
    <lineage>
        <taxon>Eukaryota</taxon>
        <taxon>Metazoa</taxon>
        <taxon>Chordata</taxon>
        <taxon>Craniata</taxon>
        <taxon>Vertebrata</taxon>
        <taxon>Euteleostomi</taxon>
        <taxon>Mammalia</taxon>
        <taxon>Eutheria</taxon>
        <taxon>Euarchontoglires</taxon>
        <taxon>Primates</taxon>
        <taxon>Haplorrhini</taxon>
        <taxon>Catarrhini</taxon>
        <taxon>Hominidae</taxon>
        <taxon>Homo</taxon>
    </lineage>
</organism>